<evidence type="ECO:0000255" key="1">
    <source>
        <dbReference type="HAMAP-Rule" id="MF_00090"/>
    </source>
</evidence>
<evidence type="ECO:0000256" key="2">
    <source>
        <dbReference type="SAM" id="MobiDB-lite"/>
    </source>
</evidence>
<gene>
    <name evidence="1" type="primary">pcm</name>
    <name type="ordered locus">Bcenmc03_1846</name>
</gene>
<name>PIMT_BURO0</name>
<organism>
    <name type="scientific">Burkholderia orbicola (strain MC0-3)</name>
    <dbReference type="NCBI Taxonomy" id="406425"/>
    <lineage>
        <taxon>Bacteria</taxon>
        <taxon>Pseudomonadati</taxon>
        <taxon>Pseudomonadota</taxon>
        <taxon>Betaproteobacteria</taxon>
        <taxon>Burkholderiales</taxon>
        <taxon>Burkholderiaceae</taxon>
        <taxon>Burkholderia</taxon>
        <taxon>Burkholderia cepacia complex</taxon>
        <taxon>Burkholderia orbicola</taxon>
    </lineage>
</organism>
<feature type="chain" id="PRO_0000351828" description="Protein-L-isoaspartate O-methyltransferase">
    <location>
        <begin position="1"/>
        <end position="310"/>
    </location>
</feature>
<feature type="region of interest" description="Disordered" evidence="2">
    <location>
        <begin position="1"/>
        <end position="44"/>
    </location>
</feature>
<feature type="region of interest" description="Disordered" evidence="2">
    <location>
        <begin position="67"/>
        <end position="88"/>
    </location>
</feature>
<feature type="compositionally biased region" description="Basic and acidic residues" evidence="2">
    <location>
        <begin position="14"/>
        <end position="29"/>
    </location>
</feature>
<feature type="compositionally biased region" description="Low complexity" evidence="2">
    <location>
        <begin position="32"/>
        <end position="44"/>
    </location>
</feature>
<feature type="compositionally biased region" description="Pro residues" evidence="2">
    <location>
        <begin position="75"/>
        <end position="86"/>
    </location>
</feature>
<feature type="active site" evidence="1">
    <location>
        <position position="157"/>
    </location>
</feature>
<protein>
    <recommendedName>
        <fullName evidence="1">Protein-L-isoaspartate O-methyltransferase</fullName>
        <ecNumber evidence="1">2.1.1.77</ecNumber>
    </recommendedName>
    <alternativeName>
        <fullName evidence="1">L-isoaspartyl protein carboxyl methyltransferase</fullName>
    </alternativeName>
    <alternativeName>
        <fullName evidence="1">Protein L-isoaspartyl methyltransferase</fullName>
    </alternativeName>
    <alternativeName>
        <fullName evidence="1">Protein-beta-aspartate methyltransferase</fullName>
        <shortName evidence="1">PIMT</shortName>
    </alternativeName>
</protein>
<sequence length="310" mass="32923">MSGERAKRFPLALEDLKRAPRKSEGRPGERQAAGAVPKAADKPAAVLKPVAVKPAAVRAPLPGIAAAKPATAPKPTAPKPALPKPAAPSIAPAGAFALTSERVRERMVERLRANGVTDARVLDAMAAVPRHLFVDPGLATQAYEDSALPIGHQQTISKPSVVARMIELAMAGRTLERVLEIGTGCGYQAAVLSHVARDVYSIERIKPLYERAKLNLRPLRVPNIRLHYGDGRVGLPSAAPFDAIVIAAAGLDVPQALLEQLAIGGRLVAPVGAQSGQHQVLTLVERVAHAQWRESRLDRVFFVPLKSGVI</sequence>
<comment type="function">
    <text evidence="1">Catalyzes the methyl esterification of L-isoaspartyl residues in peptides and proteins that result from spontaneous decomposition of normal L-aspartyl and L-asparaginyl residues. It plays a role in the repair and/or degradation of damaged proteins.</text>
</comment>
<comment type="catalytic activity">
    <reaction evidence="1">
        <text>[protein]-L-isoaspartate + S-adenosyl-L-methionine = [protein]-L-isoaspartate alpha-methyl ester + S-adenosyl-L-homocysteine</text>
        <dbReference type="Rhea" id="RHEA:12705"/>
        <dbReference type="Rhea" id="RHEA-COMP:12143"/>
        <dbReference type="Rhea" id="RHEA-COMP:12144"/>
        <dbReference type="ChEBI" id="CHEBI:57856"/>
        <dbReference type="ChEBI" id="CHEBI:59789"/>
        <dbReference type="ChEBI" id="CHEBI:90596"/>
        <dbReference type="ChEBI" id="CHEBI:90598"/>
        <dbReference type="EC" id="2.1.1.77"/>
    </reaction>
</comment>
<comment type="subcellular location">
    <subcellularLocation>
        <location evidence="1">Cytoplasm</location>
    </subcellularLocation>
</comment>
<comment type="similarity">
    <text evidence="1">Belongs to the methyltransferase superfamily. L-isoaspartyl/D-aspartyl protein methyltransferase family.</text>
</comment>
<accession>B1JTA2</accession>
<dbReference type="EC" id="2.1.1.77" evidence="1"/>
<dbReference type="EMBL" id="CP000958">
    <property type="protein sequence ID" value="ACA91007.1"/>
    <property type="molecule type" value="Genomic_DNA"/>
</dbReference>
<dbReference type="RefSeq" id="WP_012328632.1">
    <property type="nucleotide sequence ID" value="NC_010508.1"/>
</dbReference>
<dbReference type="SMR" id="B1JTA2"/>
<dbReference type="GeneID" id="83048619"/>
<dbReference type="KEGG" id="bcm:Bcenmc03_1846"/>
<dbReference type="HOGENOM" id="CLU_055432_1_0_4"/>
<dbReference type="Proteomes" id="UP000002169">
    <property type="component" value="Chromosome 1"/>
</dbReference>
<dbReference type="GO" id="GO:0005737">
    <property type="term" value="C:cytoplasm"/>
    <property type="evidence" value="ECO:0007669"/>
    <property type="project" value="UniProtKB-SubCell"/>
</dbReference>
<dbReference type="GO" id="GO:0004719">
    <property type="term" value="F:protein-L-isoaspartate (D-aspartate) O-methyltransferase activity"/>
    <property type="evidence" value="ECO:0007669"/>
    <property type="project" value="UniProtKB-UniRule"/>
</dbReference>
<dbReference type="GO" id="GO:0032259">
    <property type="term" value="P:methylation"/>
    <property type="evidence" value="ECO:0007669"/>
    <property type="project" value="UniProtKB-KW"/>
</dbReference>
<dbReference type="GO" id="GO:0036211">
    <property type="term" value="P:protein modification process"/>
    <property type="evidence" value="ECO:0007669"/>
    <property type="project" value="UniProtKB-UniRule"/>
</dbReference>
<dbReference type="GO" id="GO:0030091">
    <property type="term" value="P:protein repair"/>
    <property type="evidence" value="ECO:0007669"/>
    <property type="project" value="UniProtKB-UniRule"/>
</dbReference>
<dbReference type="CDD" id="cd02440">
    <property type="entry name" value="AdoMet_MTases"/>
    <property type="match status" value="1"/>
</dbReference>
<dbReference type="FunFam" id="3.40.50.150:FF:000010">
    <property type="entry name" value="Protein-L-isoaspartate O-methyltransferase"/>
    <property type="match status" value="1"/>
</dbReference>
<dbReference type="Gene3D" id="3.40.50.150">
    <property type="entry name" value="Vaccinia Virus protein VP39"/>
    <property type="match status" value="1"/>
</dbReference>
<dbReference type="HAMAP" id="MF_00090">
    <property type="entry name" value="PIMT"/>
    <property type="match status" value="1"/>
</dbReference>
<dbReference type="InterPro" id="IPR000682">
    <property type="entry name" value="PCMT"/>
</dbReference>
<dbReference type="InterPro" id="IPR029063">
    <property type="entry name" value="SAM-dependent_MTases_sf"/>
</dbReference>
<dbReference type="NCBIfam" id="TIGR00080">
    <property type="entry name" value="pimt"/>
    <property type="match status" value="1"/>
</dbReference>
<dbReference type="NCBIfam" id="NF001453">
    <property type="entry name" value="PRK00312.1"/>
    <property type="match status" value="1"/>
</dbReference>
<dbReference type="PANTHER" id="PTHR11579">
    <property type="entry name" value="PROTEIN-L-ISOASPARTATE O-METHYLTRANSFERASE"/>
    <property type="match status" value="1"/>
</dbReference>
<dbReference type="PANTHER" id="PTHR11579:SF0">
    <property type="entry name" value="PROTEIN-L-ISOASPARTATE(D-ASPARTATE) O-METHYLTRANSFERASE"/>
    <property type="match status" value="1"/>
</dbReference>
<dbReference type="Pfam" id="PF01135">
    <property type="entry name" value="PCMT"/>
    <property type="match status" value="1"/>
</dbReference>
<dbReference type="SUPFAM" id="SSF53335">
    <property type="entry name" value="S-adenosyl-L-methionine-dependent methyltransferases"/>
    <property type="match status" value="1"/>
</dbReference>
<dbReference type="PROSITE" id="PS01279">
    <property type="entry name" value="PCMT"/>
    <property type="match status" value="1"/>
</dbReference>
<reference key="1">
    <citation type="submission" date="2008-02" db="EMBL/GenBank/DDBJ databases">
        <title>Complete sequence of chromosome 1 of Burkholderia cenocepacia MC0-3.</title>
        <authorList>
            <person name="Copeland A."/>
            <person name="Lucas S."/>
            <person name="Lapidus A."/>
            <person name="Barry K."/>
            <person name="Bruce D."/>
            <person name="Goodwin L."/>
            <person name="Glavina del Rio T."/>
            <person name="Dalin E."/>
            <person name="Tice H."/>
            <person name="Pitluck S."/>
            <person name="Chain P."/>
            <person name="Malfatti S."/>
            <person name="Shin M."/>
            <person name="Vergez L."/>
            <person name="Schmutz J."/>
            <person name="Larimer F."/>
            <person name="Land M."/>
            <person name="Hauser L."/>
            <person name="Kyrpides N."/>
            <person name="Mikhailova N."/>
            <person name="Tiedje J."/>
            <person name="Richardson P."/>
        </authorList>
    </citation>
    <scope>NUCLEOTIDE SEQUENCE [LARGE SCALE GENOMIC DNA]</scope>
    <source>
        <strain>MC0-3</strain>
    </source>
</reference>
<keyword id="KW-0963">Cytoplasm</keyword>
<keyword id="KW-0489">Methyltransferase</keyword>
<keyword id="KW-0949">S-adenosyl-L-methionine</keyword>
<keyword id="KW-0808">Transferase</keyword>
<proteinExistence type="inferred from homology"/>